<sequence length="225" mass="24057">MLTKNLLLCFAAAKAALAVPHDSVAQRSDALHMLSERSTPSSTGENNGFYYSFWTDGGGDVTYTNGDAGAYTVEWSNVGNFVGGKGWNPGSAQDITYSGTFTPSGNGYLSVYGWTTDPLIEYYIVESYGDYNPGSGGTYKGTVTSDGSVYDIYTATRTNAASIQGTATFTQYWSVRQNKRVGGTVTTSNHFNAWAKLGMNLGTHNYQIVATEGYQSSGSSSITVQ</sequence>
<name>XYNB_ASPNC</name>
<reference key="1">
    <citation type="journal article" date="2007" name="Nat. Biotechnol.">
        <title>Genome sequencing and analysis of the versatile cell factory Aspergillus niger CBS 513.88.</title>
        <authorList>
            <person name="Pel H.J."/>
            <person name="de Winde J.H."/>
            <person name="Archer D.B."/>
            <person name="Dyer P.S."/>
            <person name="Hofmann G."/>
            <person name="Schaap P.J."/>
            <person name="Turner G."/>
            <person name="de Vries R.P."/>
            <person name="Albang R."/>
            <person name="Albermann K."/>
            <person name="Andersen M.R."/>
            <person name="Bendtsen J.D."/>
            <person name="Benen J.A.E."/>
            <person name="van den Berg M."/>
            <person name="Breestraat S."/>
            <person name="Caddick M.X."/>
            <person name="Contreras R."/>
            <person name="Cornell M."/>
            <person name="Coutinho P.M."/>
            <person name="Danchin E.G.J."/>
            <person name="Debets A.J.M."/>
            <person name="Dekker P."/>
            <person name="van Dijck P.W.M."/>
            <person name="van Dijk A."/>
            <person name="Dijkhuizen L."/>
            <person name="Driessen A.J.M."/>
            <person name="d'Enfert C."/>
            <person name="Geysens S."/>
            <person name="Goosen C."/>
            <person name="Groot G.S.P."/>
            <person name="de Groot P.W.J."/>
            <person name="Guillemette T."/>
            <person name="Henrissat B."/>
            <person name="Herweijer M."/>
            <person name="van den Hombergh J.P.T.W."/>
            <person name="van den Hondel C.A.M.J.J."/>
            <person name="van der Heijden R.T.J.M."/>
            <person name="van der Kaaij R.M."/>
            <person name="Klis F.M."/>
            <person name="Kools H.J."/>
            <person name="Kubicek C.P."/>
            <person name="van Kuyk P.A."/>
            <person name="Lauber J."/>
            <person name="Lu X."/>
            <person name="van der Maarel M.J.E.C."/>
            <person name="Meulenberg R."/>
            <person name="Menke H."/>
            <person name="Mortimer M.A."/>
            <person name="Nielsen J."/>
            <person name="Oliver S.G."/>
            <person name="Olsthoorn M."/>
            <person name="Pal K."/>
            <person name="van Peij N.N.M.E."/>
            <person name="Ram A.F.J."/>
            <person name="Rinas U."/>
            <person name="Roubos J.A."/>
            <person name="Sagt C.M.J."/>
            <person name="Schmoll M."/>
            <person name="Sun J."/>
            <person name="Ussery D."/>
            <person name="Varga J."/>
            <person name="Vervecken W."/>
            <person name="van de Vondervoort P.J.J."/>
            <person name="Wedler H."/>
            <person name="Woesten H.A.B."/>
            <person name="Zeng A.-P."/>
            <person name="van Ooyen A.J.J."/>
            <person name="Visser J."/>
            <person name="Stam H."/>
        </authorList>
    </citation>
    <scope>NUCLEOTIDE SEQUENCE [LARGE SCALE GENOMIC DNA]</scope>
    <source>
        <strain>ATCC MYA-4892 / CBS 513.88 / FGSC A1513</strain>
    </source>
</reference>
<protein>
    <recommendedName>
        <fullName>Probable endo-1,4-beta-xylanase B</fullName>
        <shortName>Xylanase B</shortName>
        <ecNumber>3.2.1.8</ecNumber>
    </recommendedName>
    <alternativeName>
        <fullName>1,4-beta-D-xylan xylanohydrolase B</fullName>
    </alternativeName>
    <alternativeName>
        <fullName>Endo-1,4-beta-xylanase G1</fullName>
        <shortName>Xylanase G1</shortName>
    </alternativeName>
</protein>
<evidence type="ECO:0000250" key="1"/>
<evidence type="ECO:0000255" key="2"/>
<evidence type="ECO:0000255" key="3">
    <source>
        <dbReference type="PROSITE-ProRule" id="PRU01097"/>
    </source>
</evidence>
<evidence type="ECO:0000255" key="4">
    <source>
        <dbReference type="PROSITE-ProRule" id="PRU10062"/>
    </source>
</evidence>
<evidence type="ECO:0000255" key="5">
    <source>
        <dbReference type="PROSITE-ProRule" id="PRU10063"/>
    </source>
</evidence>
<evidence type="ECO:0000305" key="6"/>
<accession>A2Q7I0</accession>
<organism>
    <name type="scientific">Aspergillus niger (strain ATCC MYA-4892 / CBS 513.88 / FGSC A1513)</name>
    <dbReference type="NCBI Taxonomy" id="425011"/>
    <lineage>
        <taxon>Eukaryota</taxon>
        <taxon>Fungi</taxon>
        <taxon>Dikarya</taxon>
        <taxon>Ascomycota</taxon>
        <taxon>Pezizomycotina</taxon>
        <taxon>Eurotiomycetes</taxon>
        <taxon>Eurotiomycetidae</taxon>
        <taxon>Eurotiales</taxon>
        <taxon>Aspergillaceae</taxon>
        <taxon>Aspergillus</taxon>
        <taxon>Aspergillus subgen. Circumdati</taxon>
    </lineage>
</organism>
<dbReference type="EC" id="3.2.1.8"/>
<dbReference type="EMBL" id="AM269952">
    <property type="protein sequence ID" value="CAK43456.1"/>
    <property type="molecule type" value="Genomic_DNA"/>
</dbReference>
<dbReference type="RefSeq" id="XP_001388522.1">
    <property type="nucleotide sequence ID" value="XM_001388485.2"/>
</dbReference>
<dbReference type="SMR" id="A2Q7I0"/>
<dbReference type="CAZy" id="GH11">
    <property type="family name" value="Glycoside Hydrolase Family 11"/>
</dbReference>
<dbReference type="EnsemblFungi" id="CAK43456">
    <property type="protein sequence ID" value="CAK43456"/>
    <property type="gene ID" value="An01g00780"/>
</dbReference>
<dbReference type="GeneID" id="4978152"/>
<dbReference type="KEGG" id="ang:An01g00780"/>
<dbReference type="VEuPathDB" id="FungiDB:An01g00780"/>
<dbReference type="HOGENOM" id="CLU_052631_0_0_1"/>
<dbReference type="UniPathway" id="UPA00114"/>
<dbReference type="Proteomes" id="UP000006706">
    <property type="component" value="Chromosome 2R"/>
</dbReference>
<dbReference type="GO" id="GO:0005576">
    <property type="term" value="C:extracellular region"/>
    <property type="evidence" value="ECO:0000250"/>
    <property type="project" value="UniProtKB"/>
</dbReference>
<dbReference type="GO" id="GO:0031176">
    <property type="term" value="F:endo-1,4-beta-xylanase activity"/>
    <property type="evidence" value="ECO:0000314"/>
    <property type="project" value="AspGD"/>
</dbReference>
<dbReference type="GO" id="GO:0045493">
    <property type="term" value="P:xylan catabolic process"/>
    <property type="evidence" value="ECO:0000314"/>
    <property type="project" value="AspGD"/>
</dbReference>
<dbReference type="FunFam" id="2.60.120.180:FF:000001">
    <property type="entry name" value="Endo-1,4-beta-xylanase"/>
    <property type="match status" value="1"/>
</dbReference>
<dbReference type="Gene3D" id="2.60.120.180">
    <property type="match status" value="1"/>
</dbReference>
<dbReference type="InterPro" id="IPR013320">
    <property type="entry name" value="ConA-like_dom_sf"/>
</dbReference>
<dbReference type="InterPro" id="IPR013319">
    <property type="entry name" value="GH11/12"/>
</dbReference>
<dbReference type="InterPro" id="IPR018208">
    <property type="entry name" value="GH11_AS_1"/>
</dbReference>
<dbReference type="InterPro" id="IPR033119">
    <property type="entry name" value="GH11_AS_2"/>
</dbReference>
<dbReference type="InterPro" id="IPR033123">
    <property type="entry name" value="GH11_dom"/>
</dbReference>
<dbReference type="InterPro" id="IPR001137">
    <property type="entry name" value="Glyco_hydro_11"/>
</dbReference>
<dbReference type="PANTHER" id="PTHR46828">
    <property type="entry name" value="ENDO-1,4-BETA-XYLANASE A-RELATED"/>
    <property type="match status" value="1"/>
</dbReference>
<dbReference type="PANTHER" id="PTHR46828:SF2">
    <property type="entry name" value="ENDO-1,4-BETA-XYLANASE A-RELATED"/>
    <property type="match status" value="1"/>
</dbReference>
<dbReference type="Pfam" id="PF00457">
    <property type="entry name" value="Glyco_hydro_11"/>
    <property type="match status" value="1"/>
</dbReference>
<dbReference type="PRINTS" id="PR00911">
    <property type="entry name" value="GLHYDRLASE11"/>
</dbReference>
<dbReference type="SUPFAM" id="SSF49899">
    <property type="entry name" value="Concanavalin A-like lectins/glucanases"/>
    <property type="match status" value="1"/>
</dbReference>
<dbReference type="PROSITE" id="PS00776">
    <property type="entry name" value="GH11_1"/>
    <property type="match status" value="1"/>
</dbReference>
<dbReference type="PROSITE" id="PS00777">
    <property type="entry name" value="GH11_2"/>
    <property type="match status" value="1"/>
</dbReference>
<dbReference type="PROSITE" id="PS51761">
    <property type="entry name" value="GH11_3"/>
    <property type="match status" value="1"/>
</dbReference>
<gene>
    <name type="primary">xlnB</name>
    <name type="synonym">xynB</name>
    <name type="synonym">xynG1</name>
    <name type="ORF">An01g00780</name>
</gene>
<comment type="function">
    <text evidence="1">Endo-1,4-beta-xylanase involved in the hydrolysis of xylan, a major structural heterogeneous polysaccharide found in plant biomass representing the second most abundant polysaccharide in the biosphere, after cellulose.</text>
</comment>
<comment type="catalytic activity">
    <reaction>
        <text>Endohydrolysis of (1-&gt;4)-beta-D-xylosidic linkages in xylans.</text>
        <dbReference type="EC" id="3.2.1.8"/>
    </reaction>
</comment>
<comment type="pathway">
    <text>Glycan degradation; xylan degradation.</text>
</comment>
<comment type="subcellular location">
    <subcellularLocation>
        <location evidence="1">Secreted</location>
    </subcellularLocation>
</comment>
<comment type="similarity">
    <text evidence="6">Belongs to the glycosyl hydrolase 11 (cellulase G) family.</text>
</comment>
<proteinExistence type="inferred from homology"/>
<feature type="signal peptide" evidence="2">
    <location>
        <begin position="1"/>
        <end position="18"/>
    </location>
</feature>
<feature type="chain" id="PRO_5000219293" description="Probable endo-1,4-beta-xylanase B">
    <location>
        <begin position="19"/>
        <end position="225"/>
    </location>
</feature>
<feature type="domain" description="GH11" evidence="3">
    <location>
        <begin position="37"/>
        <end position="225"/>
    </location>
</feature>
<feature type="active site" description="Nucleophile" evidence="4">
    <location>
        <position position="121"/>
    </location>
</feature>
<feature type="active site" description="Proton donor" evidence="5">
    <location>
        <position position="212"/>
    </location>
</feature>
<keyword id="KW-0119">Carbohydrate metabolism</keyword>
<keyword id="KW-0326">Glycosidase</keyword>
<keyword id="KW-0378">Hydrolase</keyword>
<keyword id="KW-0624">Polysaccharide degradation</keyword>
<keyword id="KW-1185">Reference proteome</keyword>
<keyword id="KW-0964">Secreted</keyword>
<keyword id="KW-0732">Signal</keyword>
<keyword id="KW-0858">Xylan degradation</keyword>